<reference key="1">
    <citation type="journal article" date="2006" name="Proc. Natl. Acad. Sci. U.S.A.">
        <title>Molecular genetic anatomy of inter- and intraserotype variation in the human bacterial pathogen group A Streptococcus.</title>
        <authorList>
            <person name="Beres S.B."/>
            <person name="Richter E.W."/>
            <person name="Nagiec M.J."/>
            <person name="Sumby P."/>
            <person name="Porcella S.F."/>
            <person name="DeLeo F.R."/>
            <person name="Musser J.M."/>
        </authorList>
    </citation>
    <scope>NUCLEOTIDE SEQUENCE [LARGE SCALE GENOMIC DNA]</scope>
    <source>
        <strain>MGAS2096</strain>
    </source>
</reference>
<gene>
    <name evidence="1" type="primary">rplW</name>
    <name type="ordered locus">MGAS2096_Spy0050</name>
</gene>
<protein>
    <recommendedName>
        <fullName evidence="1">Large ribosomal subunit protein uL23</fullName>
    </recommendedName>
    <alternativeName>
        <fullName evidence="2">50S ribosomal protein L23</fullName>
    </alternativeName>
</protein>
<dbReference type="EMBL" id="CP000261">
    <property type="protein sequence ID" value="ABF35102.1"/>
    <property type="molecule type" value="Genomic_DNA"/>
</dbReference>
<dbReference type="SMR" id="Q1JE56"/>
<dbReference type="KEGG" id="spj:MGAS2096_Spy0050"/>
<dbReference type="HOGENOM" id="CLU_037562_3_2_9"/>
<dbReference type="GO" id="GO:1990904">
    <property type="term" value="C:ribonucleoprotein complex"/>
    <property type="evidence" value="ECO:0007669"/>
    <property type="project" value="UniProtKB-KW"/>
</dbReference>
<dbReference type="GO" id="GO:0005840">
    <property type="term" value="C:ribosome"/>
    <property type="evidence" value="ECO:0007669"/>
    <property type="project" value="UniProtKB-KW"/>
</dbReference>
<dbReference type="GO" id="GO:0019843">
    <property type="term" value="F:rRNA binding"/>
    <property type="evidence" value="ECO:0007669"/>
    <property type="project" value="UniProtKB-UniRule"/>
</dbReference>
<dbReference type="GO" id="GO:0003735">
    <property type="term" value="F:structural constituent of ribosome"/>
    <property type="evidence" value="ECO:0007669"/>
    <property type="project" value="InterPro"/>
</dbReference>
<dbReference type="GO" id="GO:0006412">
    <property type="term" value="P:translation"/>
    <property type="evidence" value="ECO:0007669"/>
    <property type="project" value="UniProtKB-UniRule"/>
</dbReference>
<dbReference type="FunFam" id="3.30.70.330:FF:000001">
    <property type="entry name" value="50S ribosomal protein L23"/>
    <property type="match status" value="1"/>
</dbReference>
<dbReference type="Gene3D" id="3.30.70.330">
    <property type="match status" value="1"/>
</dbReference>
<dbReference type="HAMAP" id="MF_01369_B">
    <property type="entry name" value="Ribosomal_uL23_B"/>
    <property type="match status" value="1"/>
</dbReference>
<dbReference type="InterPro" id="IPR012677">
    <property type="entry name" value="Nucleotide-bd_a/b_plait_sf"/>
</dbReference>
<dbReference type="InterPro" id="IPR013025">
    <property type="entry name" value="Ribosomal_uL23-like"/>
</dbReference>
<dbReference type="InterPro" id="IPR012678">
    <property type="entry name" value="Ribosomal_uL23/eL15/eS24_sf"/>
</dbReference>
<dbReference type="InterPro" id="IPR001014">
    <property type="entry name" value="Ribosomal_uL23_CS"/>
</dbReference>
<dbReference type="NCBIfam" id="NF004361">
    <property type="entry name" value="PRK05738.2-1"/>
    <property type="match status" value="1"/>
</dbReference>
<dbReference type="NCBIfam" id="NF004363">
    <property type="entry name" value="PRK05738.2-4"/>
    <property type="match status" value="1"/>
</dbReference>
<dbReference type="PANTHER" id="PTHR11620">
    <property type="entry name" value="60S RIBOSOMAL PROTEIN L23A"/>
    <property type="match status" value="1"/>
</dbReference>
<dbReference type="Pfam" id="PF00276">
    <property type="entry name" value="Ribosomal_L23"/>
    <property type="match status" value="1"/>
</dbReference>
<dbReference type="SUPFAM" id="SSF54189">
    <property type="entry name" value="Ribosomal proteins S24e, L23 and L15e"/>
    <property type="match status" value="1"/>
</dbReference>
<dbReference type="PROSITE" id="PS00050">
    <property type="entry name" value="RIBOSOMAL_L23"/>
    <property type="match status" value="1"/>
</dbReference>
<sequence>MNLYDVIKKPVITEKSMIALEAGKYTFEVDTRAHKLLIKQAVEAAFDGVKVASVNTVNVKPKAKRVGRYTGFTSKTKKAIITLTADSKAIELFAAEAE</sequence>
<proteinExistence type="inferred from homology"/>
<feature type="chain" id="PRO_1000068166" description="Large ribosomal subunit protein uL23">
    <location>
        <begin position="1"/>
        <end position="98"/>
    </location>
</feature>
<accession>Q1JE56</accession>
<comment type="function">
    <text evidence="1">One of the early assembly proteins it binds 23S rRNA. One of the proteins that surrounds the polypeptide exit tunnel on the outside of the ribosome. Forms the main docking site for trigger factor binding to the ribosome.</text>
</comment>
<comment type="subunit">
    <text evidence="1">Part of the 50S ribosomal subunit. Contacts protein L29, and trigger factor when it is bound to the ribosome.</text>
</comment>
<comment type="similarity">
    <text evidence="1">Belongs to the universal ribosomal protein uL23 family.</text>
</comment>
<evidence type="ECO:0000255" key="1">
    <source>
        <dbReference type="HAMAP-Rule" id="MF_01369"/>
    </source>
</evidence>
<evidence type="ECO:0000305" key="2"/>
<name>RL23_STRPB</name>
<organism>
    <name type="scientific">Streptococcus pyogenes serotype M12 (strain MGAS2096)</name>
    <dbReference type="NCBI Taxonomy" id="370553"/>
    <lineage>
        <taxon>Bacteria</taxon>
        <taxon>Bacillati</taxon>
        <taxon>Bacillota</taxon>
        <taxon>Bacilli</taxon>
        <taxon>Lactobacillales</taxon>
        <taxon>Streptococcaceae</taxon>
        <taxon>Streptococcus</taxon>
    </lineage>
</organism>
<keyword id="KW-0687">Ribonucleoprotein</keyword>
<keyword id="KW-0689">Ribosomal protein</keyword>
<keyword id="KW-0694">RNA-binding</keyword>
<keyword id="KW-0699">rRNA-binding</keyword>